<dbReference type="EMBL" id="CP000250">
    <property type="protein sequence ID" value="ABD06988.1"/>
    <property type="molecule type" value="Genomic_DNA"/>
</dbReference>
<dbReference type="RefSeq" id="WP_011441175.1">
    <property type="nucleotide sequence ID" value="NC_007778.1"/>
</dbReference>
<dbReference type="SMR" id="Q2IXS2"/>
<dbReference type="STRING" id="316058.RPB_2283"/>
<dbReference type="KEGG" id="rpb:RPB_2283"/>
<dbReference type="eggNOG" id="COG0244">
    <property type="taxonomic scope" value="Bacteria"/>
</dbReference>
<dbReference type="HOGENOM" id="CLU_092227_0_0_5"/>
<dbReference type="OrthoDB" id="9791972at2"/>
<dbReference type="Proteomes" id="UP000008809">
    <property type="component" value="Chromosome"/>
</dbReference>
<dbReference type="GO" id="GO:0015934">
    <property type="term" value="C:large ribosomal subunit"/>
    <property type="evidence" value="ECO:0007669"/>
    <property type="project" value="InterPro"/>
</dbReference>
<dbReference type="GO" id="GO:0070180">
    <property type="term" value="F:large ribosomal subunit rRNA binding"/>
    <property type="evidence" value="ECO:0007669"/>
    <property type="project" value="UniProtKB-UniRule"/>
</dbReference>
<dbReference type="GO" id="GO:0003735">
    <property type="term" value="F:structural constituent of ribosome"/>
    <property type="evidence" value="ECO:0007669"/>
    <property type="project" value="InterPro"/>
</dbReference>
<dbReference type="GO" id="GO:0006412">
    <property type="term" value="P:translation"/>
    <property type="evidence" value="ECO:0007669"/>
    <property type="project" value="UniProtKB-UniRule"/>
</dbReference>
<dbReference type="CDD" id="cd05797">
    <property type="entry name" value="Ribosomal_L10"/>
    <property type="match status" value="1"/>
</dbReference>
<dbReference type="Gene3D" id="3.30.70.1730">
    <property type="match status" value="1"/>
</dbReference>
<dbReference type="Gene3D" id="6.10.250.290">
    <property type="match status" value="1"/>
</dbReference>
<dbReference type="HAMAP" id="MF_00362">
    <property type="entry name" value="Ribosomal_uL10"/>
    <property type="match status" value="1"/>
</dbReference>
<dbReference type="InterPro" id="IPR001790">
    <property type="entry name" value="Ribosomal_uL10"/>
</dbReference>
<dbReference type="InterPro" id="IPR043141">
    <property type="entry name" value="Ribosomal_uL10-like_sf"/>
</dbReference>
<dbReference type="InterPro" id="IPR022973">
    <property type="entry name" value="Ribosomal_uL10_bac"/>
</dbReference>
<dbReference type="InterPro" id="IPR047865">
    <property type="entry name" value="Ribosomal_uL10_bac_type"/>
</dbReference>
<dbReference type="InterPro" id="IPR002363">
    <property type="entry name" value="Ribosomal_uL10_CS_bac"/>
</dbReference>
<dbReference type="NCBIfam" id="NF000955">
    <property type="entry name" value="PRK00099.1-1"/>
    <property type="match status" value="1"/>
</dbReference>
<dbReference type="PANTHER" id="PTHR11560">
    <property type="entry name" value="39S RIBOSOMAL PROTEIN L10, MITOCHONDRIAL"/>
    <property type="match status" value="1"/>
</dbReference>
<dbReference type="Pfam" id="PF00466">
    <property type="entry name" value="Ribosomal_L10"/>
    <property type="match status" value="1"/>
</dbReference>
<dbReference type="SUPFAM" id="SSF160369">
    <property type="entry name" value="Ribosomal protein L10-like"/>
    <property type="match status" value="1"/>
</dbReference>
<dbReference type="PROSITE" id="PS01109">
    <property type="entry name" value="RIBOSOMAL_L10"/>
    <property type="match status" value="1"/>
</dbReference>
<comment type="function">
    <text evidence="1">Forms part of the ribosomal stalk, playing a central role in the interaction of the ribosome with GTP-bound translation factors.</text>
</comment>
<comment type="subunit">
    <text evidence="1">Part of the ribosomal stalk of the 50S ribosomal subunit. The N-terminus interacts with L11 and the large rRNA to form the base of the stalk. The C-terminus forms an elongated spine to which L12 dimers bind in a sequential fashion forming a multimeric L10(L12)X complex.</text>
</comment>
<comment type="similarity">
    <text evidence="1">Belongs to the universal ribosomal protein uL10 family.</text>
</comment>
<organism>
    <name type="scientific">Rhodopseudomonas palustris (strain HaA2)</name>
    <dbReference type="NCBI Taxonomy" id="316058"/>
    <lineage>
        <taxon>Bacteria</taxon>
        <taxon>Pseudomonadati</taxon>
        <taxon>Pseudomonadota</taxon>
        <taxon>Alphaproteobacteria</taxon>
        <taxon>Hyphomicrobiales</taxon>
        <taxon>Nitrobacteraceae</taxon>
        <taxon>Rhodopseudomonas</taxon>
    </lineage>
</organism>
<proteinExistence type="inferred from homology"/>
<gene>
    <name evidence="1" type="primary">rplJ</name>
    <name type="ordered locus">RPB_2283</name>
</gene>
<protein>
    <recommendedName>
        <fullName evidence="1">Large ribosomal subunit protein uL10</fullName>
    </recommendedName>
    <alternativeName>
        <fullName evidence="2">50S ribosomal protein L10</fullName>
    </alternativeName>
</protein>
<accession>Q2IXS2</accession>
<name>RL10_RHOP2</name>
<sequence length="172" mass="17639">MERAAKKEAVESLNGLFQTTSVAVVAHYSGLTVAQMQKLRSQMKAAGASVKVSKNRLAKIALEGTDVVAIGSLLKGPTVIATSDDPVAAPKVAVEFAKANEKFVILGGSMGKTVLNVDGVKALASLPSLDELRGKLVGLLVAPATKIAQLTTAPAAKVARVVQAYASKSEAA</sequence>
<reference key="1">
    <citation type="submission" date="2006-01" db="EMBL/GenBank/DDBJ databases">
        <title>Complete sequence of Rhodopseudomonas palustris HaA2.</title>
        <authorList>
            <consortium name="US DOE Joint Genome Institute"/>
            <person name="Copeland A."/>
            <person name="Lucas S."/>
            <person name="Lapidus A."/>
            <person name="Barry K."/>
            <person name="Detter J.C."/>
            <person name="Glavina T."/>
            <person name="Hammon N."/>
            <person name="Israni S."/>
            <person name="Pitluck S."/>
            <person name="Chain P."/>
            <person name="Malfatti S."/>
            <person name="Shin M."/>
            <person name="Vergez L."/>
            <person name="Schmutz J."/>
            <person name="Larimer F."/>
            <person name="Land M."/>
            <person name="Hauser L."/>
            <person name="Pelletier D.A."/>
            <person name="Kyrpides N."/>
            <person name="Anderson I."/>
            <person name="Oda Y."/>
            <person name="Harwood C.S."/>
            <person name="Richardson P."/>
        </authorList>
    </citation>
    <scope>NUCLEOTIDE SEQUENCE [LARGE SCALE GENOMIC DNA]</scope>
    <source>
        <strain>HaA2</strain>
    </source>
</reference>
<feature type="chain" id="PRO_1000005573" description="Large ribosomal subunit protein uL10">
    <location>
        <begin position="1"/>
        <end position="172"/>
    </location>
</feature>
<keyword id="KW-1185">Reference proteome</keyword>
<keyword id="KW-0687">Ribonucleoprotein</keyword>
<keyword id="KW-0689">Ribosomal protein</keyword>
<keyword id="KW-0694">RNA-binding</keyword>
<keyword id="KW-0699">rRNA-binding</keyword>
<evidence type="ECO:0000255" key="1">
    <source>
        <dbReference type="HAMAP-Rule" id="MF_00362"/>
    </source>
</evidence>
<evidence type="ECO:0000305" key="2"/>